<keyword id="KW-0175">Coiled coil</keyword>
<keyword id="KW-1185">Reference proteome</keyword>
<name>FPP4_ARATH</name>
<organism>
    <name type="scientific">Arabidopsis thaliana</name>
    <name type="common">Mouse-ear cress</name>
    <dbReference type="NCBI Taxonomy" id="3702"/>
    <lineage>
        <taxon>Eukaryota</taxon>
        <taxon>Viridiplantae</taxon>
        <taxon>Streptophyta</taxon>
        <taxon>Embryophyta</taxon>
        <taxon>Tracheophyta</taxon>
        <taxon>Spermatophyta</taxon>
        <taxon>Magnoliopsida</taxon>
        <taxon>eudicotyledons</taxon>
        <taxon>Gunneridae</taxon>
        <taxon>Pentapetalae</taxon>
        <taxon>rosids</taxon>
        <taxon>malvids</taxon>
        <taxon>Brassicales</taxon>
        <taxon>Brassicaceae</taxon>
        <taxon>Camelineae</taxon>
        <taxon>Arabidopsis</taxon>
    </lineage>
</organism>
<sequence>MDRKSWPWKKKSSEKTATVTEVVDQENGKKPSYIQISFDQYTNLNGLKDEVKSYEEKVTKLEDQIKDLDLKLSTANADIVAKEVLVKQHSKVAEEAVTGWEKAEAEASALKTHLETITLAKLTVEDRAAHLDGALKECMRQIRSLKEENEQKLHDVIATKTNQMDNLRAEFESRIGEYEEELLRCGAENDALSRSLQERSNMLMRISEEKSQAESEIEHLKNNIESCEREINTLKYETHVITKELEIRNEEKNMSMRSAEAANKQHLEGVKKIAKLEAECQRLRTLVRKKLPGPAALAQMKMEVESLGFGDHRQDHRQRRSPVRPSSPLMSPMSHMSQVSEFSLDNMQKFHKENDLLTERLLAMEEETKMLKEALAKRNSELQVSRNLCAKTANRLQTLEAQMMSKSPTKRGFEMPAEIFSRQNASNPPSMASMSEDGNEDARSVAGSLMSELSQSNKDKANAKIKKTESANQLELMDDFLEMEKLACLPNGSNANGSTDHSSADSDAEIPPATQLKKRISNVLQSLPKDAAFEKILAEIQCAVKDAGVKLPSKSHGANLNGLTEEKVIAMSNETTEEKVTIVEVITQELSDALSQIYQFVTYLSKEATACSENRTFSQKVQEFSTTFEGVLGKEKTLVDFLFDLSRVLVEASELKIDVLGFHTSTVEIHSPDCIDKVALPENKALQKDSSGEHYQNGCSQSSDSEIPDDCNGTSGYEPKLATCKFTTEEFEGLKLEKEKAESNLASCEADLEATKTKLQETEKLLAEVKSDLESAQKSNGMGETQLKCMVESYRSLETRSSELEIELTSLKGKIENLEDELHDEKENHREALAKCQELEEQLQRNNQNCPNCSVIEDDPKSKQDNELAAAAEKLAECQETILLLGKQLKSMCPQTEQVASSPSQEQQALNPEEEEYATSTNPQDSKLSSPSDKDTPSMNTMKSPVASKHRHTKSNSSSSSSGLTPEKHSRGFSRFFSTKAK</sequence>
<accession>Q0WSY2</accession>
<accession>Q56WC1</accession>
<accession>Q9FXI1</accession>
<reference key="1">
    <citation type="journal article" date="2000" name="Nature">
        <title>Sequence and analysis of chromosome 1 of the plant Arabidopsis thaliana.</title>
        <authorList>
            <person name="Theologis A."/>
            <person name="Ecker J.R."/>
            <person name="Palm C.J."/>
            <person name="Federspiel N.A."/>
            <person name="Kaul S."/>
            <person name="White O."/>
            <person name="Alonso J."/>
            <person name="Altafi H."/>
            <person name="Araujo R."/>
            <person name="Bowman C.L."/>
            <person name="Brooks S.Y."/>
            <person name="Buehler E."/>
            <person name="Chan A."/>
            <person name="Chao Q."/>
            <person name="Chen H."/>
            <person name="Cheuk R.F."/>
            <person name="Chin C.W."/>
            <person name="Chung M.K."/>
            <person name="Conn L."/>
            <person name="Conway A.B."/>
            <person name="Conway A.R."/>
            <person name="Creasy T.H."/>
            <person name="Dewar K."/>
            <person name="Dunn P."/>
            <person name="Etgu P."/>
            <person name="Feldblyum T.V."/>
            <person name="Feng J.-D."/>
            <person name="Fong B."/>
            <person name="Fujii C.Y."/>
            <person name="Gill J.E."/>
            <person name="Goldsmith A.D."/>
            <person name="Haas B."/>
            <person name="Hansen N.F."/>
            <person name="Hughes B."/>
            <person name="Huizar L."/>
            <person name="Hunter J.L."/>
            <person name="Jenkins J."/>
            <person name="Johnson-Hopson C."/>
            <person name="Khan S."/>
            <person name="Khaykin E."/>
            <person name="Kim C.J."/>
            <person name="Koo H.L."/>
            <person name="Kremenetskaia I."/>
            <person name="Kurtz D.B."/>
            <person name="Kwan A."/>
            <person name="Lam B."/>
            <person name="Langin-Hooper S."/>
            <person name="Lee A."/>
            <person name="Lee J.M."/>
            <person name="Lenz C.A."/>
            <person name="Li J.H."/>
            <person name="Li Y.-P."/>
            <person name="Lin X."/>
            <person name="Liu S.X."/>
            <person name="Liu Z.A."/>
            <person name="Luros J.S."/>
            <person name="Maiti R."/>
            <person name="Marziali A."/>
            <person name="Militscher J."/>
            <person name="Miranda M."/>
            <person name="Nguyen M."/>
            <person name="Nierman W.C."/>
            <person name="Osborne B.I."/>
            <person name="Pai G."/>
            <person name="Peterson J."/>
            <person name="Pham P.K."/>
            <person name="Rizzo M."/>
            <person name="Rooney T."/>
            <person name="Rowley D."/>
            <person name="Sakano H."/>
            <person name="Salzberg S.L."/>
            <person name="Schwartz J.R."/>
            <person name="Shinn P."/>
            <person name="Southwick A.M."/>
            <person name="Sun H."/>
            <person name="Tallon L.J."/>
            <person name="Tambunga G."/>
            <person name="Toriumi M.J."/>
            <person name="Town C.D."/>
            <person name="Utterback T."/>
            <person name="Van Aken S."/>
            <person name="Vaysberg M."/>
            <person name="Vysotskaia V.S."/>
            <person name="Walker M."/>
            <person name="Wu D."/>
            <person name="Yu G."/>
            <person name="Fraser C.M."/>
            <person name="Venter J.C."/>
            <person name="Davis R.W."/>
        </authorList>
    </citation>
    <scope>NUCLEOTIDE SEQUENCE [LARGE SCALE GENOMIC DNA]</scope>
    <source>
        <strain>cv. Columbia</strain>
    </source>
</reference>
<reference key="2">
    <citation type="journal article" date="2017" name="Plant J.">
        <title>Araport11: a complete reannotation of the Arabidopsis thaliana reference genome.</title>
        <authorList>
            <person name="Cheng C.Y."/>
            <person name="Krishnakumar V."/>
            <person name="Chan A.P."/>
            <person name="Thibaud-Nissen F."/>
            <person name="Schobel S."/>
            <person name="Town C.D."/>
        </authorList>
    </citation>
    <scope>GENOME REANNOTATION</scope>
    <source>
        <strain>cv. Columbia</strain>
    </source>
</reference>
<reference key="3">
    <citation type="submission" date="2006-07" db="EMBL/GenBank/DDBJ databases">
        <title>Large-scale analysis of RIKEN Arabidopsis full-length (RAFL) cDNAs.</title>
        <authorList>
            <person name="Totoki Y."/>
            <person name="Seki M."/>
            <person name="Ishida J."/>
            <person name="Nakajima M."/>
            <person name="Enju A."/>
            <person name="Kamiya A."/>
            <person name="Narusaka M."/>
            <person name="Shin-i T."/>
            <person name="Nakagawa M."/>
            <person name="Sakamoto N."/>
            <person name="Oishi K."/>
            <person name="Kohara Y."/>
            <person name="Kobayashi M."/>
            <person name="Toyoda A."/>
            <person name="Sakaki Y."/>
            <person name="Sakurai T."/>
            <person name="Iida K."/>
            <person name="Akiyama K."/>
            <person name="Satou M."/>
            <person name="Toyoda T."/>
            <person name="Konagaya A."/>
            <person name="Carninci P."/>
            <person name="Kawai J."/>
            <person name="Hayashizaki Y."/>
            <person name="Shinozaki K."/>
        </authorList>
    </citation>
    <scope>NUCLEOTIDE SEQUENCE [LARGE SCALE MRNA]</scope>
    <source>
        <strain>cv. Columbia</strain>
    </source>
</reference>
<reference key="4">
    <citation type="journal article" date="2002" name="BMC Genomics">
        <title>Four signature motifs define the first class of structurally related large coiled-coil proteins in plants.</title>
        <authorList>
            <person name="Gindullis F."/>
            <person name="Rose A."/>
            <person name="Patel S."/>
            <person name="Meier I."/>
        </authorList>
    </citation>
    <scope>GENE FAMILY</scope>
    <scope>NOMENCLATURE</scope>
</reference>
<reference key="5">
    <citation type="journal article" date="2009" name="Plant Physiol.">
        <title>Large-scale Arabidopsis phosphoproteome profiling reveals novel chloroplast kinase substrates and phosphorylation networks.</title>
        <authorList>
            <person name="Reiland S."/>
            <person name="Messerli G."/>
            <person name="Baerenfaller K."/>
            <person name="Gerrits B."/>
            <person name="Endler A."/>
            <person name="Grossmann J."/>
            <person name="Gruissem W."/>
            <person name="Baginsky S."/>
        </authorList>
    </citation>
    <scope>IDENTIFICATION BY MASS SPECTROMETRY [LARGE SCALE ANALYSIS]</scope>
</reference>
<protein>
    <recommendedName>
        <fullName>Filament-like plant protein 4</fullName>
        <shortName>AtFPP4</shortName>
    </recommendedName>
</protein>
<comment type="subunit">
    <text evidence="1">Interacts with WPP/MAF proteins.</text>
</comment>
<comment type="similarity">
    <text evidence="4">Belongs to the FPP family.</text>
</comment>
<comment type="sequence caution" evidence="4">
    <conflict type="erroneous gene model prediction">
        <sequence resource="EMBL-CDS" id="AAG12549"/>
    </conflict>
</comment>
<feature type="chain" id="PRO_0000347202" description="Filament-like plant protein 4">
    <location>
        <begin position="1"/>
        <end position="982"/>
    </location>
</feature>
<feature type="region of interest" description="Disordered" evidence="3">
    <location>
        <begin position="311"/>
        <end position="333"/>
    </location>
</feature>
<feature type="region of interest" description="Disordered" evidence="3">
    <location>
        <begin position="423"/>
        <end position="466"/>
    </location>
</feature>
<feature type="region of interest" description="Disordered" evidence="3">
    <location>
        <begin position="687"/>
        <end position="711"/>
    </location>
</feature>
<feature type="region of interest" description="Disordered" evidence="3">
    <location>
        <begin position="896"/>
        <end position="982"/>
    </location>
</feature>
<feature type="coiled-coil region" evidence="2">
    <location>
        <begin position="39"/>
        <end position="83"/>
    </location>
</feature>
<feature type="coiled-coil region" evidence="2">
    <location>
        <begin position="125"/>
        <end position="291"/>
    </location>
</feature>
<feature type="coiled-coil region" evidence="2">
    <location>
        <begin position="345"/>
        <end position="401"/>
    </location>
</feature>
<feature type="coiled-coil region" evidence="2">
    <location>
        <begin position="452"/>
        <end position="475"/>
    </location>
</feature>
<feature type="coiled-coil region" evidence="2">
    <location>
        <begin position="722"/>
        <end position="885"/>
    </location>
</feature>
<feature type="compositionally biased region" description="Low complexity" evidence="3">
    <location>
        <begin position="323"/>
        <end position="333"/>
    </location>
</feature>
<feature type="compositionally biased region" description="Polar residues" evidence="3">
    <location>
        <begin position="423"/>
        <end position="433"/>
    </location>
</feature>
<feature type="compositionally biased region" description="Basic and acidic residues" evidence="3">
    <location>
        <begin position="457"/>
        <end position="466"/>
    </location>
</feature>
<feature type="compositionally biased region" description="Polar residues" evidence="3">
    <location>
        <begin position="693"/>
        <end position="705"/>
    </location>
</feature>
<feature type="compositionally biased region" description="Polar residues" evidence="3">
    <location>
        <begin position="896"/>
        <end position="910"/>
    </location>
</feature>
<feature type="compositionally biased region" description="Polar residues" evidence="3">
    <location>
        <begin position="918"/>
        <end position="943"/>
    </location>
</feature>
<evidence type="ECO:0000250" key="1"/>
<evidence type="ECO:0000255" key="2"/>
<evidence type="ECO:0000256" key="3">
    <source>
        <dbReference type="SAM" id="MobiDB-lite"/>
    </source>
</evidence>
<evidence type="ECO:0000305" key="4"/>
<gene>
    <name type="primary">FPP4</name>
    <name type="ordered locus">At1g19835</name>
    <name type="ORF">F6F9.12</name>
</gene>
<dbReference type="EMBL" id="AC007797">
    <property type="protein sequence ID" value="AAG12549.1"/>
    <property type="status" value="ALT_SEQ"/>
    <property type="molecule type" value="Genomic_DNA"/>
</dbReference>
<dbReference type="EMBL" id="CP002684">
    <property type="protein sequence ID" value="AEE29903.1"/>
    <property type="molecule type" value="Genomic_DNA"/>
</dbReference>
<dbReference type="EMBL" id="CP002684">
    <property type="protein sequence ID" value="AEE29904.1"/>
    <property type="molecule type" value="Genomic_DNA"/>
</dbReference>
<dbReference type="EMBL" id="CP002684">
    <property type="protein sequence ID" value="ANM58666.1"/>
    <property type="molecule type" value="Genomic_DNA"/>
</dbReference>
<dbReference type="EMBL" id="CP002684">
    <property type="protein sequence ID" value="ANM58667.1"/>
    <property type="molecule type" value="Genomic_DNA"/>
</dbReference>
<dbReference type="EMBL" id="CP002684">
    <property type="protein sequence ID" value="ANM58668.1"/>
    <property type="molecule type" value="Genomic_DNA"/>
</dbReference>
<dbReference type="EMBL" id="CP002684">
    <property type="protein sequence ID" value="ANM58669.1"/>
    <property type="molecule type" value="Genomic_DNA"/>
</dbReference>
<dbReference type="EMBL" id="AK222122">
    <property type="protein sequence ID" value="BAD95104.1"/>
    <property type="molecule type" value="mRNA"/>
</dbReference>
<dbReference type="EMBL" id="AK227784">
    <property type="protein sequence ID" value="BAE99766.1"/>
    <property type="molecule type" value="mRNA"/>
</dbReference>
<dbReference type="PIR" id="E86331">
    <property type="entry name" value="E86331"/>
</dbReference>
<dbReference type="RefSeq" id="NP_001185042.1">
    <property type="nucleotide sequence ID" value="NM_001198113.1"/>
</dbReference>
<dbReference type="RefSeq" id="NP_001319045.1">
    <property type="nucleotide sequence ID" value="NM_001332410.1"/>
</dbReference>
<dbReference type="RefSeq" id="NP_001321083.1">
    <property type="nucleotide sequence ID" value="NM_001332412.1"/>
</dbReference>
<dbReference type="RefSeq" id="NP_001321084.1">
    <property type="nucleotide sequence ID" value="NM_001332413.1"/>
</dbReference>
<dbReference type="RefSeq" id="NP_001321085.1">
    <property type="nucleotide sequence ID" value="NM_001332411.1"/>
</dbReference>
<dbReference type="RefSeq" id="NP_173412.1">
    <property type="nucleotide sequence ID" value="NM_101838.3"/>
</dbReference>
<dbReference type="SMR" id="Q0WSY2"/>
<dbReference type="BioGRID" id="23810">
    <property type="interactions" value="3"/>
</dbReference>
<dbReference type="FunCoup" id="Q0WSY2">
    <property type="interactions" value="885"/>
</dbReference>
<dbReference type="IntAct" id="Q0WSY2">
    <property type="interactions" value="1"/>
</dbReference>
<dbReference type="STRING" id="3702.Q0WSY2"/>
<dbReference type="iPTMnet" id="Q0WSY2"/>
<dbReference type="PaxDb" id="3702-AT1G19835.1"/>
<dbReference type="ProteomicsDB" id="228884"/>
<dbReference type="EnsemblPlants" id="AT1G19835.1">
    <property type="protein sequence ID" value="AT1G19835.1"/>
    <property type="gene ID" value="AT1G19835"/>
</dbReference>
<dbReference type="EnsemblPlants" id="AT1G19835.2">
    <property type="protein sequence ID" value="AT1G19835.2"/>
    <property type="gene ID" value="AT1G19835"/>
</dbReference>
<dbReference type="EnsemblPlants" id="AT1G19835.3">
    <property type="protein sequence ID" value="AT1G19835.3"/>
    <property type="gene ID" value="AT1G19835"/>
</dbReference>
<dbReference type="EnsemblPlants" id="AT1G19835.4">
    <property type="protein sequence ID" value="AT1G19835.4"/>
    <property type="gene ID" value="AT1G19835"/>
</dbReference>
<dbReference type="EnsemblPlants" id="AT1G19835.5">
    <property type="protein sequence ID" value="AT1G19835.5"/>
    <property type="gene ID" value="AT1G19835"/>
</dbReference>
<dbReference type="EnsemblPlants" id="AT1G19835.6">
    <property type="protein sequence ID" value="AT1G19835.6"/>
    <property type="gene ID" value="AT1G19835"/>
</dbReference>
<dbReference type="GeneID" id="838571"/>
<dbReference type="Gramene" id="AT1G19835.1">
    <property type="protein sequence ID" value="AT1G19835.1"/>
    <property type="gene ID" value="AT1G19835"/>
</dbReference>
<dbReference type="Gramene" id="AT1G19835.2">
    <property type="protein sequence ID" value="AT1G19835.2"/>
    <property type="gene ID" value="AT1G19835"/>
</dbReference>
<dbReference type="Gramene" id="AT1G19835.3">
    <property type="protein sequence ID" value="AT1G19835.3"/>
    <property type="gene ID" value="AT1G19835"/>
</dbReference>
<dbReference type="Gramene" id="AT1G19835.4">
    <property type="protein sequence ID" value="AT1G19835.4"/>
    <property type="gene ID" value="AT1G19835"/>
</dbReference>
<dbReference type="Gramene" id="AT1G19835.5">
    <property type="protein sequence ID" value="AT1G19835.5"/>
    <property type="gene ID" value="AT1G19835"/>
</dbReference>
<dbReference type="Gramene" id="AT1G19835.6">
    <property type="protein sequence ID" value="AT1G19835.6"/>
    <property type="gene ID" value="AT1G19835"/>
</dbReference>
<dbReference type="KEGG" id="ath:AT1G19835"/>
<dbReference type="Araport" id="AT1G19835"/>
<dbReference type="TAIR" id="AT1G19835">
    <property type="gene designation" value="TCS1"/>
</dbReference>
<dbReference type="eggNOG" id="ENOG502QU34">
    <property type="taxonomic scope" value="Eukaryota"/>
</dbReference>
<dbReference type="HOGENOM" id="CLU_008957_0_0_1"/>
<dbReference type="InParanoid" id="Q0WSY2"/>
<dbReference type="OMA" id="AQKSNGM"/>
<dbReference type="PhylomeDB" id="Q0WSY2"/>
<dbReference type="PRO" id="PR:Q0WSY2"/>
<dbReference type="Proteomes" id="UP000006548">
    <property type="component" value="Chromosome 1"/>
</dbReference>
<dbReference type="ExpressionAtlas" id="Q0WSY2">
    <property type="expression patterns" value="baseline and differential"/>
</dbReference>
<dbReference type="GO" id="GO:0008017">
    <property type="term" value="F:microtubule binding"/>
    <property type="evidence" value="ECO:0000314"/>
    <property type="project" value="TAIR"/>
</dbReference>
<dbReference type="GO" id="GO:0046785">
    <property type="term" value="P:microtubule polymerization"/>
    <property type="evidence" value="ECO:0000314"/>
    <property type="project" value="TAIR"/>
</dbReference>
<dbReference type="GO" id="GO:0010090">
    <property type="term" value="P:trichome morphogenesis"/>
    <property type="evidence" value="ECO:0000315"/>
    <property type="project" value="TAIR"/>
</dbReference>
<dbReference type="Gene3D" id="1.10.287.1490">
    <property type="match status" value="1"/>
</dbReference>
<dbReference type="InterPro" id="IPR008587">
    <property type="entry name" value="FPP_plant"/>
</dbReference>
<dbReference type="PANTHER" id="PTHR31580">
    <property type="entry name" value="FILAMENT-LIKE PLANT PROTEIN 4"/>
    <property type="match status" value="1"/>
</dbReference>
<dbReference type="PANTHER" id="PTHR31580:SF43">
    <property type="entry name" value="FILAMENT-LIKE PLANT PROTEIN 4"/>
    <property type="match status" value="1"/>
</dbReference>
<dbReference type="Pfam" id="PF05911">
    <property type="entry name" value="FPP"/>
    <property type="match status" value="1"/>
</dbReference>
<dbReference type="SUPFAM" id="SSF57997">
    <property type="entry name" value="Tropomyosin"/>
    <property type="match status" value="1"/>
</dbReference>
<proteinExistence type="evidence at protein level"/>